<evidence type="ECO:0000255" key="1">
    <source>
        <dbReference type="HAMAP-Rule" id="MF_00279"/>
    </source>
</evidence>
<evidence type="ECO:0000305" key="2"/>
<proteinExistence type="inferred from homology"/>
<dbReference type="EC" id="2.6.99.2" evidence="1"/>
<dbReference type="EMBL" id="AE016828">
    <property type="protein sequence ID" value="AAO90991.2"/>
    <property type="status" value="ALT_INIT"/>
    <property type="molecule type" value="Genomic_DNA"/>
</dbReference>
<dbReference type="RefSeq" id="NP_820477.2">
    <property type="nucleotide sequence ID" value="NC_002971.3"/>
</dbReference>
<dbReference type="SMR" id="Q83BL1"/>
<dbReference type="STRING" id="227377.CBU_1494"/>
<dbReference type="EnsemblBacteria" id="AAO90991">
    <property type="protein sequence ID" value="AAO90991"/>
    <property type="gene ID" value="CBU_1494"/>
</dbReference>
<dbReference type="GeneID" id="1209404"/>
<dbReference type="KEGG" id="cbu:CBU_1494"/>
<dbReference type="PATRIC" id="fig|227377.7.peg.1496"/>
<dbReference type="eggNOG" id="COG0854">
    <property type="taxonomic scope" value="Bacteria"/>
</dbReference>
<dbReference type="HOGENOM" id="CLU_074563_0_0_6"/>
<dbReference type="OrthoDB" id="9806590at2"/>
<dbReference type="UniPathway" id="UPA00244">
    <property type="reaction ID" value="UER00313"/>
</dbReference>
<dbReference type="Proteomes" id="UP000002671">
    <property type="component" value="Chromosome"/>
</dbReference>
<dbReference type="GO" id="GO:0005829">
    <property type="term" value="C:cytosol"/>
    <property type="evidence" value="ECO:0000318"/>
    <property type="project" value="GO_Central"/>
</dbReference>
<dbReference type="GO" id="GO:0033856">
    <property type="term" value="F:pyridoxine 5'-phosphate synthase activity"/>
    <property type="evidence" value="ECO:0000318"/>
    <property type="project" value="GO_Central"/>
</dbReference>
<dbReference type="GO" id="GO:0008615">
    <property type="term" value="P:pyridoxine biosynthetic process"/>
    <property type="evidence" value="ECO:0000318"/>
    <property type="project" value="GO_Central"/>
</dbReference>
<dbReference type="CDD" id="cd00003">
    <property type="entry name" value="PNPsynthase"/>
    <property type="match status" value="1"/>
</dbReference>
<dbReference type="FunFam" id="3.20.20.70:FF:000042">
    <property type="entry name" value="Pyridoxine 5'-phosphate synthase"/>
    <property type="match status" value="1"/>
</dbReference>
<dbReference type="Gene3D" id="3.20.20.70">
    <property type="entry name" value="Aldolase class I"/>
    <property type="match status" value="1"/>
</dbReference>
<dbReference type="HAMAP" id="MF_00279">
    <property type="entry name" value="PdxJ"/>
    <property type="match status" value="1"/>
</dbReference>
<dbReference type="InterPro" id="IPR013785">
    <property type="entry name" value="Aldolase_TIM"/>
</dbReference>
<dbReference type="InterPro" id="IPR004569">
    <property type="entry name" value="PyrdxlP_synth_PdxJ"/>
</dbReference>
<dbReference type="InterPro" id="IPR036130">
    <property type="entry name" value="Pyridoxine-5'_phos_synth"/>
</dbReference>
<dbReference type="NCBIfam" id="TIGR00559">
    <property type="entry name" value="pdxJ"/>
    <property type="match status" value="1"/>
</dbReference>
<dbReference type="NCBIfam" id="NF003623">
    <property type="entry name" value="PRK05265.1-1"/>
    <property type="match status" value="1"/>
</dbReference>
<dbReference type="NCBIfam" id="NF003624">
    <property type="entry name" value="PRK05265.1-2"/>
    <property type="match status" value="1"/>
</dbReference>
<dbReference type="NCBIfam" id="NF003625">
    <property type="entry name" value="PRK05265.1-3"/>
    <property type="match status" value="1"/>
</dbReference>
<dbReference type="NCBIfam" id="NF003626">
    <property type="entry name" value="PRK05265.1-4"/>
    <property type="match status" value="1"/>
</dbReference>
<dbReference type="NCBIfam" id="NF003627">
    <property type="entry name" value="PRK05265.1-5"/>
    <property type="match status" value="1"/>
</dbReference>
<dbReference type="PANTHER" id="PTHR30456">
    <property type="entry name" value="PYRIDOXINE 5'-PHOSPHATE SYNTHASE"/>
    <property type="match status" value="1"/>
</dbReference>
<dbReference type="PANTHER" id="PTHR30456:SF0">
    <property type="entry name" value="PYRIDOXINE 5'-PHOSPHATE SYNTHASE"/>
    <property type="match status" value="1"/>
</dbReference>
<dbReference type="Pfam" id="PF03740">
    <property type="entry name" value="PdxJ"/>
    <property type="match status" value="1"/>
</dbReference>
<dbReference type="SUPFAM" id="SSF63892">
    <property type="entry name" value="Pyridoxine 5'-phosphate synthase"/>
    <property type="match status" value="1"/>
</dbReference>
<name>PDXJ_COXBU</name>
<organism>
    <name type="scientific">Coxiella burnetii (strain RSA 493 / Nine Mile phase I)</name>
    <dbReference type="NCBI Taxonomy" id="227377"/>
    <lineage>
        <taxon>Bacteria</taxon>
        <taxon>Pseudomonadati</taxon>
        <taxon>Pseudomonadota</taxon>
        <taxon>Gammaproteobacteria</taxon>
        <taxon>Legionellales</taxon>
        <taxon>Coxiellaceae</taxon>
        <taxon>Coxiella</taxon>
    </lineage>
</organism>
<sequence>MVRLGVNIDHIATLRQARGVDYPDPVEAAMMAIEAGADGITLHLREDRRHIQDDDVRNLKRKLTVPMNLEMATAEDIIQFAEEIKPEHCCLVPEKREELTTEGGLDVAGQQNTLKKVCARLAKVGIEVSLFIDPEEKQIDAAKAAGAPVIEIHTGHYANAKTDHEHNQQLKRIADAAAYADSLGLTVNAGHGLTIHNVQSIAAIPVINELNIGHSIISRGVLIGLAEAVKEMKTLIAGAQ</sequence>
<reference key="1">
    <citation type="journal article" date="2003" name="Proc. Natl. Acad. Sci. U.S.A.">
        <title>Complete genome sequence of the Q-fever pathogen, Coxiella burnetii.</title>
        <authorList>
            <person name="Seshadri R."/>
            <person name="Paulsen I.T."/>
            <person name="Eisen J.A."/>
            <person name="Read T.D."/>
            <person name="Nelson K.E."/>
            <person name="Nelson W.C."/>
            <person name="Ward N.L."/>
            <person name="Tettelin H."/>
            <person name="Davidsen T.M."/>
            <person name="Beanan M.J."/>
            <person name="DeBoy R.T."/>
            <person name="Daugherty S.C."/>
            <person name="Brinkac L.M."/>
            <person name="Madupu R."/>
            <person name="Dodson R.J."/>
            <person name="Khouri H.M."/>
            <person name="Lee K.H."/>
            <person name="Carty H.A."/>
            <person name="Scanlan D."/>
            <person name="Heinzen R.A."/>
            <person name="Thompson H.A."/>
            <person name="Samuel J.E."/>
            <person name="Fraser C.M."/>
            <person name="Heidelberg J.F."/>
        </authorList>
    </citation>
    <scope>NUCLEOTIDE SEQUENCE [LARGE SCALE GENOMIC DNA]</scope>
    <source>
        <strain>RSA 493 / Nine Mile phase I</strain>
    </source>
</reference>
<gene>
    <name evidence="1" type="primary">pdxJ</name>
    <name type="ordered locus">CBU_1494</name>
</gene>
<comment type="function">
    <text evidence="1">Catalyzes the complicated ring closure reaction between the two acyclic compounds 1-deoxy-D-xylulose-5-phosphate (DXP) and 3-amino-2-oxopropyl phosphate (1-amino-acetone-3-phosphate or AAP) to form pyridoxine 5'-phosphate (PNP) and inorganic phosphate.</text>
</comment>
<comment type="catalytic activity">
    <reaction evidence="1">
        <text>3-amino-2-oxopropyl phosphate + 1-deoxy-D-xylulose 5-phosphate = pyridoxine 5'-phosphate + phosphate + 2 H2O + H(+)</text>
        <dbReference type="Rhea" id="RHEA:15265"/>
        <dbReference type="ChEBI" id="CHEBI:15377"/>
        <dbReference type="ChEBI" id="CHEBI:15378"/>
        <dbReference type="ChEBI" id="CHEBI:43474"/>
        <dbReference type="ChEBI" id="CHEBI:57279"/>
        <dbReference type="ChEBI" id="CHEBI:57792"/>
        <dbReference type="ChEBI" id="CHEBI:58589"/>
        <dbReference type="EC" id="2.6.99.2"/>
    </reaction>
</comment>
<comment type="pathway">
    <text evidence="1">Cofactor biosynthesis; pyridoxine 5'-phosphate biosynthesis; pyridoxine 5'-phosphate from D-erythrose 4-phosphate: step 5/5.</text>
</comment>
<comment type="subunit">
    <text evidence="1">Homooctamer; tetramer of dimers.</text>
</comment>
<comment type="subcellular location">
    <subcellularLocation>
        <location evidence="1">Cytoplasm</location>
    </subcellularLocation>
</comment>
<comment type="similarity">
    <text evidence="1">Belongs to the PNP synthase family.</text>
</comment>
<comment type="sequence caution" evidence="2">
    <conflict type="erroneous initiation">
        <sequence resource="EMBL-CDS" id="AAO90991"/>
    </conflict>
</comment>
<protein>
    <recommendedName>
        <fullName evidence="1">Pyridoxine 5'-phosphate synthase</fullName>
        <shortName evidence="1">PNP synthase</shortName>
        <ecNumber evidence="1">2.6.99.2</ecNumber>
    </recommendedName>
</protein>
<keyword id="KW-0963">Cytoplasm</keyword>
<keyword id="KW-0664">Pyridoxine biosynthesis</keyword>
<keyword id="KW-1185">Reference proteome</keyword>
<keyword id="KW-0808">Transferase</keyword>
<feature type="chain" id="PRO_0000231800" description="Pyridoxine 5'-phosphate synthase">
    <location>
        <begin position="1"/>
        <end position="240"/>
    </location>
</feature>
<feature type="active site" description="Proton acceptor" evidence="1">
    <location>
        <position position="43"/>
    </location>
</feature>
<feature type="active site" description="Proton acceptor" evidence="1">
    <location>
        <position position="70"/>
    </location>
</feature>
<feature type="active site" description="Proton donor" evidence="1">
    <location>
        <position position="191"/>
    </location>
</feature>
<feature type="binding site" evidence="1">
    <location>
        <position position="7"/>
    </location>
    <ligand>
        <name>3-amino-2-oxopropyl phosphate</name>
        <dbReference type="ChEBI" id="CHEBI:57279"/>
    </ligand>
</feature>
<feature type="binding site" evidence="1">
    <location>
        <begin position="9"/>
        <end position="10"/>
    </location>
    <ligand>
        <name>1-deoxy-D-xylulose 5-phosphate</name>
        <dbReference type="ChEBI" id="CHEBI:57792"/>
    </ligand>
</feature>
<feature type="binding site" evidence="1">
    <location>
        <position position="18"/>
    </location>
    <ligand>
        <name>3-amino-2-oxopropyl phosphate</name>
        <dbReference type="ChEBI" id="CHEBI:57279"/>
    </ligand>
</feature>
<feature type="binding site" evidence="1">
    <location>
        <position position="45"/>
    </location>
    <ligand>
        <name>1-deoxy-D-xylulose 5-phosphate</name>
        <dbReference type="ChEBI" id="CHEBI:57792"/>
    </ligand>
</feature>
<feature type="binding site" evidence="1">
    <location>
        <position position="50"/>
    </location>
    <ligand>
        <name>1-deoxy-D-xylulose 5-phosphate</name>
        <dbReference type="ChEBI" id="CHEBI:57792"/>
    </ligand>
</feature>
<feature type="binding site" evidence="1">
    <location>
        <position position="100"/>
    </location>
    <ligand>
        <name>1-deoxy-D-xylulose 5-phosphate</name>
        <dbReference type="ChEBI" id="CHEBI:57792"/>
    </ligand>
</feature>
<feature type="binding site" evidence="1">
    <location>
        <position position="192"/>
    </location>
    <ligand>
        <name>3-amino-2-oxopropyl phosphate</name>
        <dbReference type="ChEBI" id="CHEBI:57279"/>
    </ligand>
</feature>
<feature type="binding site" evidence="1">
    <location>
        <begin position="213"/>
        <end position="214"/>
    </location>
    <ligand>
        <name>3-amino-2-oxopropyl phosphate</name>
        <dbReference type="ChEBI" id="CHEBI:57279"/>
    </ligand>
</feature>
<feature type="site" description="Transition state stabilizer" evidence="1">
    <location>
        <position position="151"/>
    </location>
</feature>
<accession>Q83BL1</accession>